<proteinExistence type="evidence at transcript level"/>
<evidence type="ECO:0000305" key="1"/>
<name>SRP_VITRI</name>
<protein>
    <recommendedName>
        <fullName>Stress-related protein</fullName>
    </recommendedName>
</protein>
<accession>Q9SW70</accession>
<feature type="chain" id="PRO_0000221063" description="Stress-related protein">
    <location>
        <begin position="1"/>
        <end position="248"/>
    </location>
</feature>
<sequence length="248" mass="27546">MAESEAKQQPETVHGEEKRLKYLDFVQVAAIYVIVCFSSLYEYAKENSGPLKPGVQTVEGTVKTVIGPVYEKFYDVPFELLMFVDRKVEASIYELERHVPSLVKRASCQAITVAQKAPELALAVASEVQRPGVVDTAKNITKNVYSKCEPTAKELCSKYEPVAEQYAVSAWRSLNRLPLFPQVAQVVVPTAAYWSEKYNQSVSYTAERGYTVALYLPLIPTERIAKVFQDGSALPTVETNGNAIPLAQ</sequence>
<reference key="1">
    <citation type="submission" date="1999-08" db="EMBL/GenBank/DDBJ databases">
        <title>Freezing tolerance in grapevines.</title>
        <authorList>
            <person name="Li X.-Z."/>
            <person name="McKersie B.D."/>
        </authorList>
    </citation>
    <scope>NUCLEOTIDE SEQUENCE [MRNA]</scope>
    <source>
        <tissue>Flower bud</tissue>
    </source>
</reference>
<comment type="induction">
    <text evidence="1">By cold stress.</text>
</comment>
<comment type="similarity">
    <text evidence="1">Belongs to the REF/SRPP family.</text>
</comment>
<dbReference type="EMBL" id="AF178990">
    <property type="protein sequence ID" value="AAD51854.1"/>
    <property type="molecule type" value="mRNA"/>
</dbReference>
<dbReference type="InterPro" id="IPR008802">
    <property type="entry name" value="REF"/>
</dbReference>
<dbReference type="PANTHER" id="PTHR33732:SF3">
    <property type="entry name" value="OS07G0671800 PROTEIN"/>
    <property type="match status" value="1"/>
</dbReference>
<dbReference type="PANTHER" id="PTHR33732">
    <property type="entry name" value="REF/SRPP-LIKE PROTEIN OS05G0151300/LOC_OS05G05940"/>
    <property type="match status" value="1"/>
</dbReference>
<dbReference type="Pfam" id="PF05755">
    <property type="entry name" value="REF"/>
    <property type="match status" value="1"/>
</dbReference>
<organism>
    <name type="scientific">Vitis riparia</name>
    <name type="common">Frost grape</name>
    <name type="synonym">Vitis vulpina</name>
    <dbReference type="NCBI Taxonomy" id="96939"/>
    <lineage>
        <taxon>Eukaryota</taxon>
        <taxon>Viridiplantae</taxon>
        <taxon>Streptophyta</taxon>
        <taxon>Embryophyta</taxon>
        <taxon>Tracheophyta</taxon>
        <taxon>Spermatophyta</taxon>
        <taxon>Magnoliopsida</taxon>
        <taxon>eudicotyledons</taxon>
        <taxon>Gunneridae</taxon>
        <taxon>Pentapetalae</taxon>
        <taxon>rosids</taxon>
        <taxon>Vitales</taxon>
        <taxon>Vitaceae</taxon>
        <taxon>Viteae</taxon>
        <taxon>Vitis</taxon>
    </lineage>
</organism>
<keyword id="KW-0346">Stress response</keyword>
<gene>
    <name type="primary">SRP</name>
</gene>